<accession>Q8D205</accession>
<dbReference type="EMBL" id="BA000021">
    <property type="protein sequence ID" value="BAC24696.1"/>
    <property type="molecule type" value="Genomic_DNA"/>
</dbReference>
<dbReference type="SMR" id="Q8D205"/>
<dbReference type="STRING" id="36870.gene:10369059"/>
<dbReference type="KEGG" id="wbr:rplP"/>
<dbReference type="eggNOG" id="COG0197">
    <property type="taxonomic scope" value="Bacteria"/>
</dbReference>
<dbReference type="HOGENOM" id="CLU_078858_2_1_6"/>
<dbReference type="OrthoDB" id="9802589at2"/>
<dbReference type="Proteomes" id="UP000000562">
    <property type="component" value="Chromosome"/>
</dbReference>
<dbReference type="GO" id="GO:0022625">
    <property type="term" value="C:cytosolic large ribosomal subunit"/>
    <property type="evidence" value="ECO:0007669"/>
    <property type="project" value="TreeGrafter"/>
</dbReference>
<dbReference type="GO" id="GO:0019843">
    <property type="term" value="F:rRNA binding"/>
    <property type="evidence" value="ECO:0007669"/>
    <property type="project" value="UniProtKB-UniRule"/>
</dbReference>
<dbReference type="GO" id="GO:0003735">
    <property type="term" value="F:structural constituent of ribosome"/>
    <property type="evidence" value="ECO:0007669"/>
    <property type="project" value="InterPro"/>
</dbReference>
<dbReference type="GO" id="GO:0000049">
    <property type="term" value="F:tRNA binding"/>
    <property type="evidence" value="ECO:0007669"/>
    <property type="project" value="UniProtKB-KW"/>
</dbReference>
<dbReference type="GO" id="GO:0006412">
    <property type="term" value="P:translation"/>
    <property type="evidence" value="ECO:0007669"/>
    <property type="project" value="UniProtKB-UniRule"/>
</dbReference>
<dbReference type="CDD" id="cd01433">
    <property type="entry name" value="Ribosomal_L16_L10e"/>
    <property type="match status" value="1"/>
</dbReference>
<dbReference type="FunFam" id="3.90.1170.10:FF:000001">
    <property type="entry name" value="50S ribosomal protein L16"/>
    <property type="match status" value="1"/>
</dbReference>
<dbReference type="Gene3D" id="3.90.1170.10">
    <property type="entry name" value="Ribosomal protein L10e/L16"/>
    <property type="match status" value="1"/>
</dbReference>
<dbReference type="HAMAP" id="MF_01342">
    <property type="entry name" value="Ribosomal_uL16"/>
    <property type="match status" value="1"/>
</dbReference>
<dbReference type="InterPro" id="IPR047873">
    <property type="entry name" value="Ribosomal_uL16"/>
</dbReference>
<dbReference type="InterPro" id="IPR000114">
    <property type="entry name" value="Ribosomal_uL16_bact-type"/>
</dbReference>
<dbReference type="InterPro" id="IPR020798">
    <property type="entry name" value="Ribosomal_uL16_CS"/>
</dbReference>
<dbReference type="InterPro" id="IPR016180">
    <property type="entry name" value="Ribosomal_uL16_dom"/>
</dbReference>
<dbReference type="InterPro" id="IPR036920">
    <property type="entry name" value="Ribosomal_uL16_sf"/>
</dbReference>
<dbReference type="NCBIfam" id="TIGR01164">
    <property type="entry name" value="rplP_bact"/>
    <property type="match status" value="1"/>
</dbReference>
<dbReference type="PANTHER" id="PTHR12220">
    <property type="entry name" value="50S/60S RIBOSOMAL PROTEIN L16"/>
    <property type="match status" value="1"/>
</dbReference>
<dbReference type="PANTHER" id="PTHR12220:SF13">
    <property type="entry name" value="LARGE RIBOSOMAL SUBUNIT PROTEIN UL16M"/>
    <property type="match status" value="1"/>
</dbReference>
<dbReference type="Pfam" id="PF00252">
    <property type="entry name" value="Ribosomal_L16"/>
    <property type="match status" value="1"/>
</dbReference>
<dbReference type="PRINTS" id="PR00060">
    <property type="entry name" value="RIBOSOMALL16"/>
</dbReference>
<dbReference type="SUPFAM" id="SSF54686">
    <property type="entry name" value="Ribosomal protein L16p/L10e"/>
    <property type="match status" value="1"/>
</dbReference>
<dbReference type="PROSITE" id="PS00586">
    <property type="entry name" value="RIBOSOMAL_L16_1"/>
    <property type="match status" value="1"/>
</dbReference>
<dbReference type="PROSITE" id="PS00701">
    <property type="entry name" value="RIBOSOMAL_L16_2"/>
    <property type="match status" value="1"/>
</dbReference>
<organism>
    <name type="scientific">Wigglesworthia glossinidia brevipalpis</name>
    <dbReference type="NCBI Taxonomy" id="36870"/>
    <lineage>
        <taxon>Bacteria</taxon>
        <taxon>Pseudomonadati</taxon>
        <taxon>Pseudomonadota</taxon>
        <taxon>Gammaproteobacteria</taxon>
        <taxon>Enterobacterales</taxon>
        <taxon>Erwiniaceae</taxon>
        <taxon>Wigglesworthia</taxon>
    </lineage>
</organism>
<proteinExistence type="inferred from homology"/>
<evidence type="ECO:0000255" key="1">
    <source>
        <dbReference type="HAMAP-Rule" id="MF_01342"/>
    </source>
</evidence>
<evidence type="ECO:0000305" key="2"/>
<protein>
    <recommendedName>
        <fullName evidence="1">Large ribosomal subunit protein uL16</fullName>
    </recommendedName>
    <alternativeName>
        <fullName evidence="2">50S ribosomal protein L16</fullName>
    </alternativeName>
</protein>
<name>RL16_WIGBR</name>
<sequence length="136" mass="15699">MLQPKRTKFRKMQKGRNRGLSVNSEINFGKFGLKAIQRGRLTSRQIESARRAMSRSIKRQGKIWIRVFPDKPITKKPLEVRMGKGKGNVEYWVALIQPGKILYEIDEVSETIARYAFKLATAKLPITTTFVNKMVM</sequence>
<comment type="function">
    <text evidence="1">Binds 23S rRNA and is also seen to make contacts with the A and possibly P site tRNAs.</text>
</comment>
<comment type="subunit">
    <text evidence="1">Part of the 50S ribosomal subunit.</text>
</comment>
<comment type="similarity">
    <text evidence="1">Belongs to the universal ribosomal protein uL16 family.</text>
</comment>
<reference key="1">
    <citation type="journal article" date="2002" name="Nat. Genet.">
        <title>Genome sequence of the endocellular obligate symbiont of tsetse flies, Wigglesworthia glossinidia.</title>
        <authorList>
            <person name="Akman L."/>
            <person name="Yamashita A."/>
            <person name="Watanabe H."/>
            <person name="Oshima K."/>
            <person name="Shiba T."/>
            <person name="Hattori M."/>
            <person name="Aksoy S."/>
        </authorList>
    </citation>
    <scope>NUCLEOTIDE SEQUENCE [LARGE SCALE GENOMIC DNA]</scope>
</reference>
<keyword id="KW-1185">Reference proteome</keyword>
<keyword id="KW-0687">Ribonucleoprotein</keyword>
<keyword id="KW-0689">Ribosomal protein</keyword>
<keyword id="KW-0694">RNA-binding</keyword>
<keyword id="KW-0699">rRNA-binding</keyword>
<keyword id="KW-0820">tRNA-binding</keyword>
<feature type="chain" id="PRO_0000062249" description="Large ribosomal subunit protein uL16">
    <location>
        <begin position="1"/>
        <end position="136"/>
    </location>
</feature>
<gene>
    <name evidence="1" type="primary">rplP</name>
    <name type="ordered locus">WIGBR5500</name>
</gene>